<proteinExistence type="inferred from homology"/>
<sequence>MLDKEKKAEIINKFKLHDTDTGSPEVQIALLTERINNLNAHLQVHKKDHHSRRGLLKMVGQRRALLNYLMKTDMERYRAIIEKLDLRK</sequence>
<keyword id="KW-1185">Reference proteome</keyword>
<keyword id="KW-0687">Ribonucleoprotein</keyword>
<keyword id="KW-0689">Ribosomal protein</keyword>
<keyword id="KW-0694">RNA-binding</keyword>
<keyword id="KW-0699">rRNA-binding</keyword>
<comment type="function">
    <text evidence="1">One of the primary rRNA binding proteins, it binds directly to 16S rRNA where it helps nucleate assembly of the platform of the 30S subunit by binding and bridging several RNA helices of the 16S rRNA.</text>
</comment>
<comment type="function">
    <text evidence="1">Forms an intersubunit bridge (bridge B4) with the 23S rRNA of the 50S subunit in the ribosome.</text>
</comment>
<comment type="subunit">
    <text evidence="1">Part of the 30S ribosomal subunit. Forms a bridge to the 50S subunit in the 70S ribosome, contacting the 23S rRNA.</text>
</comment>
<comment type="similarity">
    <text evidence="1">Belongs to the universal ribosomal protein uS15 family.</text>
</comment>
<gene>
    <name evidence="1" type="primary">rpsO</name>
    <name type="ordered locus">Teth39_1204</name>
</gene>
<feature type="chain" id="PRO_1000143183" description="Small ribosomal subunit protein uS15">
    <location>
        <begin position="1"/>
        <end position="88"/>
    </location>
</feature>
<organism>
    <name type="scientific">Thermoanaerobacter pseudethanolicus (strain ATCC 33223 / 39E)</name>
    <name type="common">Clostridium thermohydrosulfuricum</name>
    <dbReference type="NCBI Taxonomy" id="340099"/>
    <lineage>
        <taxon>Bacteria</taxon>
        <taxon>Bacillati</taxon>
        <taxon>Bacillota</taxon>
        <taxon>Clostridia</taxon>
        <taxon>Thermoanaerobacterales</taxon>
        <taxon>Thermoanaerobacteraceae</taxon>
        <taxon>Thermoanaerobacter</taxon>
    </lineage>
</organism>
<evidence type="ECO:0000255" key="1">
    <source>
        <dbReference type="HAMAP-Rule" id="MF_01343"/>
    </source>
</evidence>
<evidence type="ECO:0000305" key="2"/>
<accession>B0K9P5</accession>
<protein>
    <recommendedName>
        <fullName evidence="1">Small ribosomal subunit protein uS15</fullName>
    </recommendedName>
    <alternativeName>
        <fullName evidence="2">30S ribosomal protein S15</fullName>
    </alternativeName>
</protein>
<name>RS15_THEP3</name>
<dbReference type="EMBL" id="CP000924">
    <property type="protein sequence ID" value="ABY94858.1"/>
    <property type="molecule type" value="Genomic_DNA"/>
</dbReference>
<dbReference type="RefSeq" id="WP_003866758.1">
    <property type="nucleotide sequence ID" value="NC_010321.1"/>
</dbReference>
<dbReference type="SMR" id="B0K9P5"/>
<dbReference type="STRING" id="340099.Teth39_1204"/>
<dbReference type="KEGG" id="tpd:Teth39_1204"/>
<dbReference type="eggNOG" id="COG0184">
    <property type="taxonomic scope" value="Bacteria"/>
</dbReference>
<dbReference type="HOGENOM" id="CLU_148518_0_0_9"/>
<dbReference type="Proteomes" id="UP000002156">
    <property type="component" value="Chromosome"/>
</dbReference>
<dbReference type="GO" id="GO:0022627">
    <property type="term" value="C:cytosolic small ribosomal subunit"/>
    <property type="evidence" value="ECO:0007669"/>
    <property type="project" value="TreeGrafter"/>
</dbReference>
<dbReference type="GO" id="GO:0019843">
    <property type="term" value="F:rRNA binding"/>
    <property type="evidence" value="ECO:0007669"/>
    <property type="project" value="UniProtKB-UniRule"/>
</dbReference>
<dbReference type="GO" id="GO:0003735">
    <property type="term" value="F:structural constituent of ribosome"/>
    <property type="evidence" value="ECO:0007669"/>
    <property type="project" value="InterPro"/>
</dbReference>
<dbReference type="GO" id="GO:0006412">
    <property type="term" value="P:translation"/>
    <property type="evidence" value="ECO:0007669"/>
    <property type="project" value="UniProtKB-UniRule"/>
</dbReference>
<dbReference type="CDD" id="cd00353">
    <property type="entry name" value="Ribosomal_S15p_S13e"/>
    <property type="match status" value="1"/>
</dbReference>
<dbReference type="FunFam" id="1.10.287.10:FF:000002">
    <property type="entry name" value="30S ribosomal protein S15"/>
    <property type="match status" value="1"/>
</dbReference>
<dbReference type="Gene3D" id="6.10.250.3130">
    <property type="match status" value="1"/>
</dbReference>
<dbReference type="Gene3D" id="1.10.287.10">
    <property type="entry name" value="S15/NS1, RNA-binding"/>
    <property type="match status" value="1"/>
</dbReference>
<dbReference type="HAMAP" id="MF_01343_B">
    <property type="entry name" value="Ribosomal_uS15_B"/>
    <property type="match status" value="1"/>
</dbReference>
<dbReference type="InterPro" id="IPR000589">
    <property type="entry name" value="Ribosomal_uS15"/>
</dbReference>
<dbReference type="InterPro" id="IPR005290">
    <property type="entry name" value="Ribosomal_uS15_bac-type"/>
</dbReference>
<dbReference type="InterPro" id="IPR009068">
    <property type="entry name" value="uS15_NS1_RNA-bd_sf"/>
</dbReference>
<dbReference type="NCBIfam" id="TIGR00952">
    <property type="entry name" value="S15_bact"/>
    <property type="match status" value="1"/>
</dbReference>
<dbReference type="PANTHER" id="PTHR23321">
    <property type="entry name" value="RIBOSOMAL PROTEIN S15, BACTERIAL AND ORGANELLAR"/>
    <property type="match status" value="1"/>
</dbReference>
<dbReference type="PANTHER" id="PTHR23321:SF26">
    <property type="entry name" value="SMALL RIBOSOMAL SUBUNIT PROTEIN US15M"/>
    <property type="match status" value="1"/>
</dbReference>
<dbReference type="Pfam" id="PF00312">
    <property type="entry name" value="Ribosomal_S15"/>
    <property type="match status" value="1"/>
</dbReference>
<dbReference type="SMART" id="SM01387">
    <property type="entry name" value="Ribosomal_S15"/>
    <property type="match status" value="1"/>
</dbReference>
<dbReference type="SUPFAM" id="SSF47060">
    <property type="entry name" value="S15/NS1 RNA-binding domain"/>
    <property type="match status" value="1"/>
</dbReference>
<dbReference type="PROSITE" id="PS00362">
    <property type="entry name" value="RIBOSOMAL_S15"/>
    <property type="match status" value="1"/>
</dbReference>
<reference key="1">
    <citation type="submission" date="2008-01" db="EMBL/GenBank/DDBJ databases">
        <title>Complete sequence of Thermoanaerobacter pseudethanolicus 39E.</title>
        <authorList>
            <person name="Copeland A."/>
            <person name="Lucas S."/>
            <person name="Lapidus A."/>
            <person name="Barry K."/>
            <person name="Glavina del Rio T."/>
            <person name="Dalin E."/>
            <person name="Tice H."/>
            <person name="Pitluck S."/>
            <person name="Bruce D."/>
            <person name="Goodwin L."/>
            <person name="Saunders E."/>
            <person name="Brettin T."/>
            <person name="Detter J.C."/>
            <person name="Han C."/>
            <person name="Schmutz J."/>
            <person name="Larimer F."/>
            <person name="Land M."/>
            <person name="Hauser L."/>
            <person name="Kyrpides N."/>
            <person name="Lykidis A."/>
            <person name="Hemme C."/>
            <person name="Fields M.W."/>
            <person name="He Z."/>
            <person name="Zhou J."/>
            <person name="Richardson P."/>
        </authorList>
    </citation>
    <scope>NUCLEOTIDE SEQUENCE [LARGE SCALE GENOMIC DNA]</scope>
    <source>
        <strain>ATCC 33223 / DSM 2355 / 39E</strain>
    </source>
</reference>